<keyword id="KW-0030">Aminoacyl-tRNA synthetase</keyword>
<keyword id="KW-0067">ATP-binding</keyword>
<keyword id="KW-0963">Cytoplasm</keyword>
<keyword id="KW-0436">Ligase</keyword>
<keyword id="KW-0547">Nucleotide-binding</keyword>
<keyword id="KW-0648">Protein biosynthesis</keyword>
<sequence>MSIDQRLQLITRNAAEIITIDELRKKIESEEKLKGYIGFEPSGLFHIGWLIWTQKVKDLVEAGVNMTLLRATWHAWINDKLGGDLSLIKMAADYTVEVIKNYGVDTTKLNIVDADDMVKEKDYWALVIKVAKNASLARIKRALTIMGRRAEEAEIDASKLIYPAMQVSDIFYLDLDIALGGTDQRKAHMLARDVAEKMGKKKIVSIHTPLLVGLQGGQRMSITEGMEEDDIQAEIKMSKSKPESAIFVSDSREDVERKIMGAYCPKGVAENNPILQILKYIIFPRYNFVKIERDIRYGGDVEFKDYEELERAYIEGKIHPMDLKKATARRLNEILEPIRKSLERKPEFEEMIQKISKSVTR</sequence>
<proteinExistence type="inferred from homology"/>
<evidence type="ECO:0000255" key="1">
    <source>
        <dbReference type="HAMAP-Rule" id="MF_02009"/>
    </source>
</evidence>
<accession>C3NMQ6</accession>
<organism>
    <name type="scientific">Saccharolobus islandicus (strain Y.N.15.51 / Yellowstone #2)</name>
    <name type="common">Sulfolobus islandicus</name>
    <dbReference type="NCBI Taxonomy" id="419942"/>
    <lineage>
        <taxon>Archaea</taxon>
        <taxon>Thermoproteota</taxon>
        <taxon>Thermoprotei</taxon>
        <taxon>Sulfolobales</taxon>
        <taxon>Sulfolobaceae</taxon>
        <taxon>Saccharolobus</taxon>
    </lineage>
</organism>
<reference key="1">
    <citation type="journal article" date="2009" name="Proc. Natl. Acad. Sci. U.S.A.">
        <title>Biogeography of the Sulfolobus islandicus pan-genome.</title>
        <authorList>
            <person name="Reno M.L."/>
            <person name="Held N.L."/>
            <person name="Fields C.J."/>
            <person name="Burke P.V."/>
            <person name="Whitaker R.J."/>
        </authorList>
    </citation>
    <scope>NUCLEOTIDE SEQUENCE [LARGE SCALE GENOMIC DNA]</scope>
    <source>
        <strain>Y.N.15.51 / Yellowstone #2</strain>
    </source>
</reference>
<protein>
    <recommendedName>
        <fullName evidence="1">Tyrosine--tRNA ligase</fullName>
        <ecNumber evidence="1">6.1.1.1</ecNumber>
    </recommendedName>
    <alternativeName>
        <fullName evidence="1">Tyrosyl-tRNA synthetase</fullName>
        <shortName evidence="1">TyrRS</shortName>
    </alternativeName>
</protein>
<comment type="function">
    <text evidence="1">Catalyzes the attachment of tyrosine to tRNA(Tyr) in a two-step reaction: tyrosine is first activated by ATP to form Tyr-AMP and then transferred to the acceptor end of tRNA(Tyr).</text>
</comment>
<comment type="catalytic activity">
    <reaction evidence="1">
        <text>tRNA(Tyr) + L-tyrosine + ATP = L-tyrosyl-tRNA(Tyr) + AMP + diphosphate + H(+)</text>
        <dbReference type="Rhea" id="RHEA:10220"/>
        <dbReference type="Rhea" id="RHEA-COMP:9706"/>
        <dbReference type="Rhea" id="RHEA-COMP:9707"/>
        <dbReference type="ChEBI" id="CHEBI:15378"/>
        <dbReference type="ChEBI" id="CHEBI:30616"/>
        <dbReference type="ChEBI" id="CHEBI:33019"/>
        <dbReference type="ChEBI" id="CHEBI:58315"/>
        <dbReference type="ChEBI" id="CHEBI:78442"/>
        <dbReference type="ChEBI" id="CHEBI:78536"/>
        <dbReference type="ChEBI" id="CHEBI:456215"/>
        <dbReference type="EC" id="6.1.1.1"/>
    </reaction>
</comment>
<comment type="subunit">
    <text evidence="1">Homodimer.</text>
</comment>
<comment type="subcellular location">
    <subcellularLocation>
        <location evidence="1">Cytoplasm</location>
    </subcellularLocation>
</comment>
<comment type="similarity">
    <text evidence="1">Belongs to the class-I aminoacyl-tRNA synthetase family. TyrS type 4 subfamily.</text>
</comment>
<dbReference type="EC" id="6.1.1.1" evidence="1"/>
<dbReference type="EMBL" id="CP001404">
    <property type="protein sequence ID" value="ACP47876.1"/>
    <property type="molecule type" value="Genomic_DNA"/>
</dbReference>
<dbReference type="RefSeq" id="WP_012717208.1">
    <property type="nucleotide sequence ID" value="NC_012623.1"/>
</dbReference>
<dbReference type="SMR" id="C3NMQ6"/>
<dbReference type="GeneID" id="7811177"/>
<dbReference type="KEGG" id="sin:YN1551_0751"/>
<dbReference type="HOGENOM" id="CLU_035267_1_1_2"/>
<dbReference type="Proteomes" id="UP000006818">
    <property type="component" value="Chromosome"/>
</dbReference>
<dbReference type="GO" id="GO:0005737">
    <property type="term" value="C:cytoplasm"/>
    <property type="evidence" value="ECO:0007669"/>
    <property type="project" value="UniProtKB-SubCell"/>
</dbReference>
<dbReference type="GO" id="GO:0005524">
    <property type="term" value="F:ATP binding"/>
    <property type="evidence" value="ECO:0007669"/>
    <property type="project" value="UniProtKB-UniRule"/>
</dbReference>
<dbReference type="GO" id="GO:0004831">
    <property type="term" value="F:tyrosine-tRNA ligase activity"/>
    <property type="evidence" value="ECO:0007669"/>
    <property type="project" value="UniProtKB-UniRule"/>
</dbReference>
<dbReference type="GO" id="GO:0006437">
    <property type="term" value="P:tyrosyl-tRNA aminoacylation"/>
    <property type="evidence" value="ECO:0007669"/>
    <property type="project" value="UniProtKB-UniRule"/>
</dbReference>
<dbReference type="CDD" id="cd00805">
    <property type="entry name" value="TyrRS_core"/>
    <property type="match status" value="1"/>
</dbReference>
<dbReference type="Gene3D" id="3.40.50.620">
    <property type="entry name" value="HUPs"/>
    <property type="match status" value="1"/>
</dbReference>
<dbReference type="Gene3D" id="1.10.240.10">
    <property type="entry name" value="Tyrosyl-Transfer RNA Synthetase"/>
    <property type="match status" value="1"/>
</dbReference>
<dbReference type="HAMAP" id="MF_02009">
    <property type="entry name" value="Tyr_tRNA_synth_type4"/>
    <property type="match status" value="1"/>
</dbReference>
<dbReference type="InterPro" id="IPR002305">
    <property type="entry name" value="aa-tRNA-synth_Ic"/>
</dbReference>
<dbReference type="InterPro" id="IPR014729">
    <property type="entry name" value="Rossmann-like_a/b/a_fold"/>
</dbReference>
<dbReference type="InterPro" id="IPR002307">
    <property type="entry name" value="Tyr-tRNA-ligase"/>
</dbReference>
<dbReference type="InterPro" id="IPR023678">
    <property type="entry name" value="Tyr-tRNA-ligase_4"/>
</dbReference>
<dbReference type="InterPro" id="IPR023617">
    <property type="entry name" value="Tyr-tRNA-ligase_arc/euk-type"/>
</dbReference>
<dbReference type="InterPro" id="IPR050489">
    <property type="entry name" value="Tyr-tRNA_synthase"/>
</dbReference>
<dbReference type="NCBIfam" id="NF006330">
    <property type="entry name" value="PRK08560.1"/>
    <property type="match status" value="1"/>
</dbReference>
<dbReference type="NCBIfam" id="TIGR00234">
    <property type="entry name" value="tyrS"/>
    <property type="match status" value="1"/>
</dbReference>
<dbReference type="PANTHER" id="PTHR46264:SF4">
    <property type="entry name" value="TYROSINE--TRNA LIGASE, CYTOPLASMIC"/>
    <property type="match status" value="1"/>
</dbReference>
<dbReference type="PANTHER" id="PTHR46264">
    <property type="entry name" value="TYROSINE-TRNA LIGASE"/>
    <property type="match status" value="1"/>
</dbReference>
<dbReference type="Pfam" id="PF00579">
    <property type="entry name" value="tRNA-synt_1b"/>
    <property type="match status" value="1"/>
</dbReference>
<dbReference type="PIRSF" id="PIRSF006588">
    <property type="entry name" value="TyrRS_arch_euk"/>
    <property type="match status" value="1"/>
</dbReference>
<dbReference type="PRINTS" id="PR01040">
    <property type="entry name" value="TRNASYNTHTYR"/>
</dbReference>
<dbReference type="SUPFAM" id="SSF52374">
    <property type="entry name" value="Nucleotidylyl transferase"/>
    <property type="match status" value="1"/>
</dbReference>
<gene>
    <name evidence="1" type="primary">tyrS</name>
    <name type="ordered locus">YN1551_0751</name>
</gene>
<feature type="chain" id="PRO_1000216404" description="Tyrosine--tRNA ligase">
    <location>
        <begin position="1"/>
        <end position="361"/>
    </location>
</feature>
<feature type="short sequence motif" description="'KMSKS' region">
    <location>
        <begin position="236"/>
        <end position="240"/>
    </location>
</feature>
<feature type="binding site" evidence="1">
    <location>
        <position position="36"/>
    </location>
    <ligand>
        <name>L-tyrosine</name>
        <dbReference type="ChEBI" id="CHEBI:58315"/>
    </ligand>
</feature>
<feature type="binding site" evidence="1">
    <location>
        <position position="162"/>
    </location>
    <ligand>
        <name>L-tyrosine</name>
        <dbReference type="ChEBI" id="CHEBI:58315"/>
    </ligand>
</feature>
<feature type="binding site" evidence="1">
    <location>
        <position position="166"/>
    </location>
    <ligand>
        <name>L-tyrosine</name>
        <dbReference type="ChEBI" id="CHEBI:58315"/>
    </ligand>
</feature>
<feature type="binding site" evidence="1">
    <location>
        <position position="169"/>
    </location>
    <ligand>
        <name>L-tyrosine</name>
        <dbReference type="ChEBI" id="CHEBI:58315"/>
    </ligand>
</feature>
<feature type="binding site" evidence="1">
    <location>
        <position position="184"/>
    </location>
    <ligand>
        <name>L-tyrosine</name>
        <dbReference type="ChEBI" id="CHEBI:58315"/>
    </ligand>
</feature>
<feature type="binding site" evidence="1">
    <location>
        <position position="239"/>
    </location>
    <ligand>
        <name>ATP</name>
        <dbReference type="ChEBI" id="CHEBI:30616"/>
    </ligand>
</feature>
<name>SYY_SACI1</name>